<organism>
    <name type="scientific">Mus musculus</name>
    <name type="common">Mouse</name>
    <dbReference type="NCBI Taxonomy" id="10090"/>
    <lineage>
        <taxon>Eukaryota</taxon>
        <taxon>Metazoa</taxon>
        <taxon>Chordata</taxon>
        <taxon>Craniata</taxon>
        <taxon>Vertebrata</taxon>
        <taxon>Euteleostomi</taxon>
        <taxon>Mammalia</taxon>
        <taxon>Eutheria</taxon>
        <taxon>Euarchontoglires</taxon>
        <taxon>Glires</taxon>
        <taxon>Rodentia</taxon>
        <taxon>Myomorpha</taxon>
        <taxon>Muroidea</taxon>
        <taxon>Muridae</taxon>
        <taxon>Murinae</taxon>
        <taxon>Mus</taxon>
        <taxon>Mus</taxon>
    </lineage>
</organism>
<evidence type="ECO:0000250" key="1"/>
<evidence type="ECO:0000250" key="2">
    <source>
        <dbReference type="UniProtKB" id="Q13206"/>
    </source>
</evidence>
<evidence type="ECO:0000255" key="3">
    <source>
        <dbReference type="PROSITE-ProRule" id="PRU00541"/>
    </source>
</evidence>
<evidence type="ECO:0000255" key="4">
    <source>
        <dbReference type="PROSITE-ProRule" id="PRU00542"/>
    </source>
</evidence>
<evidence type="ECO:0000256" key="5">
    <source>
        <dbReference type="SAM" id="MobiDB-lite"/>
    </source>
</evidence>
<evidence type="ECO:0000305" key="6"/>
<evidence type="ECO:0007744" key="7">
    <source>
    </source>
</evidence>
<evidence type="ECO:0007744" key="8">
    <source>
    </source>
</evidence>
<evidence type="ECO:0007744" key="9">
    <source>
    </source>
</evidence>
<evidence type="ECO:0007744" key="10">
    <source>
    </source>
</evidence>
<keyword id="KW-0007">Acetylation</keyword>
<keyword id="KW-0067">ATP-binding</keyword>
<keyword id="KW-0963">Cytoplasm</keyword>
<keyword id="KW-0347">Helicase</keyword>
<keyword id="KW-0378">Hydrolase</keyword>
<keyword id="KW-1017">Isopeptide bond</keyword>
<keyword id="KW-0547">Nucleotide-binding</keyword>
<keyword id="KW-0539">Nucleus</keyword>
<keyword id="KW-0597">Phosphoprotein</keyword>
<keyword id="KW-1185">Reference proteome</keyword>
<keyword id="KW-0694">RNA-binding</keyword>
<keyword id="KW-0832">Ubl conjugation</keyword>
<reference key="1">
    <citation type="journal article" date="2004" name="Genome Res.">
        <title>The status, quality, and expansion of the NIH full-length cDNA project: the Mammalian Gene Collection (MGC).</title>
        <authorList>
            <consortium name="The MGC Project Team"/>
        </authorList>
    </citation>
    <scope>NUCLEOTIDE SEQUENCE [LARGE SCALE MRNA]</scope>
    <source>
        <tissue>Eye</tissue>
    </source>
</reference>
<reference key="2">
    <citation type="journal article" date="2007" name="Proc. Natl. Acad. Sci. U.S.A.">
        <title>Large-scale phosphorylation analysis of mouse liver.</title>
        <authorList>
            <person name="Villen J."/>
            <person name="Beausoleil S.A."/>
            <person name="Gerber S.A."/>
            <person name="Gygi S.P."/>
        </authorList>
    </citation>
    <scope>PHOSPHORYLATION [LARGE SCALE ANALYSIS] AT THR-587</scope>
    <scope>IDENTIFICATION BY MASS SPECTROMETRY [LARGE SCALE ANALYSIS]</scope>
    <source>
        <tissue>Liver</tissue>
    </source>
</reference>
<reference key="3">
    <citation type="journal article" date="2009" name="Mol. Cell. Proteomics">
        <title>Large scale localization of protein phosphorylation by use of electron capture dissociation mass spectrometry.</title>
        <authorList>
            <person name="Sweet S.M."/>
            <person name="Bailey C.M."/>
            <person name="Cunningham D.L."/>
            <person name="Heath J.K."/>
            <person name="Cooper H.J."/>
        </authorList>
    </citation>
    <scope>PHOSPHORYLATION [LARGE SCALE ANALYSIS] AT THR-587</scope>
    <scope>IDENTIFICATION BY MASS SPECTROMETRY [LARGE SCALE ANALYSIS]</scope>
    <source>
        <tissue>Embryonic fibroblast</tissue>
    </source>
</reference>
<reference key="4">
    <citation type="journal article" date="2010" name="Cell">
        <title>A tissue-specific atlas of mouse protein phosphorylation and expression.</title>
        <authorList>
            <person name="Huttlin E.L."/>
            <person name="Jedrychowski M.P."/>
            <person name="Elias J.E."/>
            <person name="Goswami T."/>
            <person name="Rad R."/>
            <person name="Beausoleil S.A."/>
            <person name="Villen J."/>
            <person name="Haas W."/>
            <person name="Sowa M.E."/>
            <person name="Gygi S.P."/>
        </authorList>
    </citation>
    <scope>PHOSPHORYLATION [LARGE SCALE ANALYSIS] AT THR-587 AND SER-783</scope>
    <scope>IDENTIFICATION BY MASS SPECTROMETRY [LARGE SCALE ANALYSIS]</scope>
    <source>
        <tissue>Brown adipose tissue</tissue>
        <tissue>Heart</tissue>
        <tissue>Kidney</tissue>
        <tissue>Liver</tissue>
        <tissue>Lung</tissue>
        <tissue>Pancreas</tissue>
        <tissue>Spleen</tissue>
        <tissue>Testis</tissue>
    </source>
</reference>
<reference key="5">
    <citation type="journal article" date="2013" name="Mol. Cell">
        <title>SIRT5-mediated lysine desuccinylation impacts diverse metabolic pathways.</title>
        <authorList>
            <person name="Park J."/>
            <person name="Chen Y."/>
            <person name="Tishkoff D.X."/>
            <person name="Peng C."/>
            <person name="Tan M."/>
            <person name="Dai L."/>
            <person name="Xie Z."/>
            <person name="Zhang Y."/>
            <person name="Zwaans B.M."/>
            <person name="Skinner M.E."/>
            <person name="Lombard D.B."/>
            <person name="Zhao Y."/>
        </authorList>
    </citation>
    <scope>ACETYLATION [LARGE SCALE ANALYSIS] AT LYS-556</scope>
    <scope>IDENTIFICATION BY MASS SPECTROMETRY [LARGE SCALE ANALYSIS]</scope>
    <source>
        <tissue>Embryonic fibroblast</tissue>
    </source>
</reference>
<accession>Q80Y44</accession>
<dbReference type="EC" id="3.6.4.13"/>
<dbReference type="EMBL" id="BC049261">
    <property type="protein sequence ID" value="AAH49261.1"/>
    <property type="status" value="ALT_INIT"/>
    <property type="molecule type" value="mRNA"/>
</dbReference>
<dbReference type="CCDS" id="CCDS52796.1"/>
<dbReference type="RefSeq" id="NP_084212.2">
    <property type="nucleotide sequence ID" value="NM_029936.2"/>
</dbReference>
<dbReference type="SMR" id="Q80Y44"/>
<dbReference type="BioGRID" id="218780">
    <property type="interactions" value="7"/>
</dbReference>
<dbReference type="FunCoup" id="Q80Y44">
    <property type="interactions" value="4118"/>
</dbReference>
<dbReference type="IntAct" id="Q80Y44">
    <property type="interactions" value="1"/>
</dbReference>
<dbReference type="MINT" id="Q80Y44"/>
<dbReference type="STRING" id="10090.ENSMUSP00000065198"/>
<dbReference type="iPTMnet" id="Q80Y44"/>
<dbReference type="PhosphoSitePlus" id="Q80Y44"/>
<dbReference type="SwissPalm" id="Q80Y44"/>
<dbReference type="jPOST" id="Q80Y44"/>
<dbReference type="PaxDb" id="10090-ENSMUSP00000065198"/>
<dbReference type="PeptideAtlas" id="Q80Y44"/>
<dbReference type="ProteomicsDB" id="279322"/>
<dbReference type="Pumba" id="Q80Y44"/>
<dbReference type="Antibodypedia" id="1401">
    <property type="antibodies" value="48 antibodies from 16 providers"/>
</dbReference>
<dbReference type="Ensembl" id="ENSMUST00000065630.8">
    <property type="protein sequence ID" value="ENSMUSP00000065198.7"/>
    <property type="gene ID" value="ENSMUSG00000053289.9"/>
</dbReference>
<dbReference type="GeneID" id="77591"/>
<dbReference type="KEGG" id="mmu:77591"/>
<dbReference type="UCSC" id="uc009plz.2">
    <property type="organism name" value="mouse"/>
</dbReference>
<dbReference type="AGR" id="MGI:1924841"/>
<dbReference type="CTD" id="1662"/>
<dbReference type="MGI" id="MGI:1924841">
    <property type="gene designation" value="Ddx10"/>
</dbReference>
<dbReference type="VEuPathDB" id="HostDB:ENSMUSG00000053289"/>
<dbReference type="eggNOG" id="KOG0343">
    <property type="taxonomic scope" value="Eukaryota"/>
</dbReference>
<dbReference type="GeneTree" id="ENSGT00550000074980"/>
<dbReference type="HOGENOM" id="CLU_003041_26_1_1"/>
<dbReference type="InParanoid" id="Q80Y44"/>
<dbReference type="OMA" id="FLWRQKQ"/>
<dbReference type="OrthoDB" id="10259640at2759"/>
<dbReference type="PhylomeDB" id="Q80Y44"/>
<dbReference type="TreeFam" id="TF315215"/>
<dbReference type="BioGRID-ORCS" id="77591">
    <property type="hits" value="26 hits in 83 CRISPR screens"/>
</dbReference>
<dbReference type="ChiTaRS" id="Ddx10">
    <property type="organism name" value="mouse"/>
</dbReference>
<dbReference type="PRO" id="PR:Q80Y44"/>
<dbReference type="Proteomes" id="UP000000589">
    <property type="component" value="Chromosome 9"/>
</dbReference>
<dbReference type="RNAct" id="Q80Y44">
    <property type="molecule type" value="protein"/>
</dbReference>
<dbReference type="Bgee" id="ENSMUSG00000053289">
    <property type="expression patterns" value="Expressed in embryonic post-anal tail and 235 other cell types or tissues"/>
</dbReference>
<dbReference type="GO" id="GO:0005737">
    <property type="term" value="C:cytoplasm"/>
    <property type="evidence" value="ECO:0007669"/>
    <property type="project" value="UniProtKB-SubCell"/>
</dbReference>
<dbReference type="GO" id="GO:0005730">
    <property type="term" value="C:nucleolus"/>
    <property type="evidence" value="ECO:0007669"/>
    <property type="project" value="UniProtKB-SubCell"/>
</dbReference>
<dbReference type="GO" id="GO:0005524">
    <property type="term" value="F:ATP binding"/>
    <property type="evidence" value="ECO:0007669"/>
    <property type="project" value="UniProtKB-KW"/>
</dbReference>
<dbReference type="GO" id="GO:0016887">
    <property type="term" value="F:ATP hydrolysis activity"/>
    <property type="evidence" value="ECO:0007669"/>
    <property type="project" value="RHEA"/>
</dbReference>
<dbReference type="GO" id="GO:0003723">
    <property type="term" value="F:RNA binding"/>
    <property type="evidence" value="ECO:0007669"/>
    <property type="project" value="UniProtKB-KW"/>
</dbReference>
<dbReference type="GO" id="GO:0003724">
    <property type="term" value="F:RNA helicase activity"/>
    <property type="evidence" value="ECO:0007669"/>
    <property type="project" value="UniProtKB-EC"/>
</dbReference>
<dbReference type="GO" id="GO:0097065">
    <property type="term" value="P:anterior head development"/>
    <property type="evidence" value="ECO:0000315"/>
    <property type="project" value="MGI"/>
</dbReference>
<dbReference type="CDD" id="cd17941">
    <property type="entry name" value="DEADc_DDX10"/>
    <property type="match status" value="1"/>
</dbReference>
<dbReference type="CDD" id="cd18787">
    <property type="entry name" value="SF2_C_DEAD"/>
    <property type="match status" value="1"/>
</dbReference>
<dbReference type="FunFam" id="3.40.50.300:FF:000874">
    <property type="entry name" value="RNA helicase"/>
    <property type="match status" value="1"/>
</dbReference>
<dbReference type="FunFam" id="3.40.50.300:FF:001089">
    <property type="entry name" value="RNA helicase"/>
    <property type="match status" value="1"/>
</dbReference>
<dbReference type="Gene3D" id="3.40.50.300">
    <property type="entry name" value="P-loop containing nucleotide triphosphate hydrolases"/>
    <property type="match status" value="2"/>
</dbReference>
<dbReference type="InterPro" id="IPR011545">
    <property type="entry name" value="DEAD/DEAH_box_helicase_dom"/>
</dbReference>
<dbReference type="InterPro" id="IPR014001">
    <property type="entry name" value="Helicase_ATP-bd"/>
</dbReference>
<dbReference type="InterPro" id="IPR001650">
    <property type="entry name" value="Helicase_C-like"/>
</dbReference>
<dbReference type="InterPro" id="IPR027417">
    <property type="entry name" value="P-loop_NTPase"/>
</dbReference>
<dbReference type="InterPro" id="IPR000629">
    <property type="entry name" value="RNA-helicase_DEAD-box_CS"/>
</dbReference>
<dbReference type="InterPro" id="IPR014014">
    <property type="entry name" value="RNA_helicase_DEAD_Q_motif"/>
</dbReference>
<dbReference type="InterPro" id="IPR025313">
    <property type="entry name" value="SPB4-like_CTE"/>
</dbReference>
<dbReference type="PANTHER" id="PTHR24031">
    <property type="entry name" value="RNA HELICASE"/>
    <property type="match status" value="1"/>
</dbReference>
<dbReference type="Pfam" id="PF13959">
    <property type="entry name" value="CTE_SPB4"/>
    <property type="match status" value="1"/>
</dbReference>
<dbReference type="Pfam" id="PF00270">
    <property type="entry name" value="DEAD"/>
    <property type="match status" value="1"/>
</dbReference>
<dbReference type="Pfam" id="PF00271">
    <property type="entry name" value="Helicase_C"/>
    <property type="match status" value="1"/>
</dbReference>
<dbReference type="SMART" id="SM00487">
    <property type="entry name" value="DEXDc"/>
    <property type="match status" value="1"/>
</dbReference>
<dbReference type="SMART" id="SM01178">
    <property type="entry name" value="DUF4217"/>
    <property type="match status" value="1"/>
</dbReference>
<dbReference type="SMART" id="SM00490">
    <property type="entry name" value="HELICc"/>
    <property type="match status" value="1"/>
</dbReference>
<dbReference type="SUPFAM" id="SSF52540">
    <property type="entry name" value="P-loop containing nucleoside triphosphate hydrolases"/>
    <property type="match status" value="1"/>
</dbReference>
<dbReference type="PROSITE" id="PS00039">
    <property type="entry name" value="DEAD_ATP_HELICASE"/>
    <property type="match status" value="1"/>
</dbReference>
<dbReference type="PROSITE" id="PS51192">
    <property type="entry name" value="HELICASE_ATP_BIND_1"/>
    <property type="match status" value="1"/>
</dbReference>
<dbReference type="PROSITE" id="PS51194">
    <property type="entry name" value="HELICASE_CTER"/>
    <property type="match status" value="1"/>
</dbReference>
<dbReference type="PROSITE" id="PS51195">
    <property type="entry name" value="Q_MOTIF"/>
    <property type="match status" value="1"/>
</dbReference>
<name>DDX10_MOUSE</name>
<comment type="function">
    <text evidence="2">Putative ATP-dependent RNA helicase that plays various role in innate immunity or inflammation. Plays a role in the enhancement of AIM2-induced inflammasome activation by interacting with AIM2 and stabilizing its protein level. Negatively regulates viral infection by promoting interferon beta production and interferon stimulated genes/ISGs expression.</text>
</comment>
<comment type="catalytic activity">
    <reaction>
        <text>ATP + H2O = ADP + phosphate + H(+)</text>
        <dbReference type="Rhea" id="RHEA:13065"/>
        <dbReference type="ChEBI" id="CHEBI:15377"/>
        <dbReference type="ChEBI" id="CHEBI:15378"/>
        <dbReference type="ChEBI" id="CHEBI:30616"/>
        <dbReference type="ChEBI" id="CHEBI:43474"/>
        <dbReference type="ChEBI" id="CHEBI:456216"/>
        <dbReference type="EC" id="3.6.4.13"/>
    </reaction>
</comment>
<comment type="subunit">
    <text evidence="2">Interacts with AIM2; this interaction promotes AIM2 stability. Interacts with SCNA; this interaction causes DDX10 mislocalization to the nucleoplasm and cytoplasmic inclusions.</text>
</comment>
<comment type="subcellular location">
    <subcellularLocation>
        <location evidence="2">Cytoplasm</location>
    </subcellularLocation>
    <subcellularLocation>
        <location evidence="2">Nucleus</location>
    </subcellularLocation>
    <subcellularLocation>
        <location evidence="2">Nucleus</location>
        <location evidence="2">Nucleolus</location>
    </subcellularLocation>
</comment>
<comment type="domain">
    <text>The Q motif is unique to and characteristic of the DEAD box family of RNA helicases and controls ATP binding and hydrolysis.</text>
</comment>
<comment type="similarity">
    <text evidence="6">Belongs to the DEAD box helicase family. DDX10/DBP4 subfamily.</text>
</comment>
<comment type="sequence caution" evidence="6">
    <conflict type="erroneous initiation">
        <sequence resource="EMBL-CDS" id="AAH49261"/>
    </conflict>
</comment>
<sequence>MGKTVASLGQGTRPDPVRSFNRWKKKHSHRQHQKKERRKQLKKPEWQVEREGISRLMQNYEKINVNEITRFSDFPLSKKTLKGLQEAQYRLVTEIQKQTIGLALQGKDVLGAAKTGSGKTLAFLVPVLEALYRLQWTSTDGLGVLIISPTRELAYQTFEVLRKVGKNHDFSAGLIIGGKDLKHEAERINNINILVCTPGRLLQHMDETICFHATNLQMLVLDEADRILDMGFADTMNAIIENLPKKRQTLLFSATQTKSVKDLARLSLKDPEYVWVHEKAKYSTPATLEQNYIICELHQKISVLFSFLRSHLKKKSIVFFSSCKEVQYLYRVFCRLRPGISILALHGRQQQMRRMEVYNEFVRKRAAVLFATDIAARGLDFPAVNWVLQFDCPEDANTYIHRAGRTARYKEDGEALLILLPSEEQGMVQQLLQKKVPVKEIKINPEKLIDVQKKLESFLAQDQDLKERAQRCFVSYIRSVYLMKDKEVFNVSKLPITEYALSLGLAVAPRIRFLQKLEKQPSTELVKNPVTEAVPPRAPSLPNDEADESPAYVSEKMSVLHKSGERLEETEHRLASGDGDEEQDEETEDEETEDHLGKAREPHTESVVSIEEAQKVKEVSVQFLNRDDDDEDGPDADFLTVKRRDVFGLDLKENEALSKKEPSKSSVKKKLTKVAEAKKVMKRSFKVNKKITFTDEGELVQQWPQIQKCAIKDVEEEDDTGGINLDKAKERLQEEDKFDKEEYRKKIKAKHRERRLKEREARREANKRQAKARDEEEAFLDWSDEDDGGFDPSTLPDPDKHRSSEESESEDTNHKMSDTKKKQETRKRNNTEDDDVRPRSRHGKKAKWETVEPLDTGLSLAEDEELVLHLLKSQN</sequence>
<protein>
    <recommendedName>
        <fullName>Probable ATP-dependent RNA helicase DDX10</fullName>
        <ecNumber>3.6.4.13</ecNumber>
    </recommendedName>
    <alternativeName>
        <fullName>DEAD box protein 10</fullName>
    </alternativeName>
</protein>
<gene>
    <name type="primary">Ddx10</name>
</gene>
<feature type="chain" id="PRO_0000055084" description="Probable ATP-dependent RNA helicase DDX10">
    <location>
        <begin position="1"/>
        <end position="875"/>
    </location>
</feature>
<feature type="domain" description="Helicase ATP-binding" evidence="3">
    <location>
        <begin position="100"/>
        <end position="274"/>
    </location>
</feature>
<feature type="domain" description="Helicase C-terminal" evidence="4">
    <location>
        <begin position="300"/>
        <end position="449"/>
    </location>
</feature>
<feature type="region of interest" description="Disordered" evidence="5">
    <location>
        <begin position="1"/>
        <end position="44"/>
    </location>
</feature>
<feature type="region of interest" description="Disordered" evidence="5">
    <location>
        <begin position="525"/>
        <end position="612"/>
    </location>
</feature>
<feature type="region of interest" description="Disordered" evidence="5">
    <location>
        <begin position="734"/>
        <end position="860"/>
    </location>
</feature>
<feature type="short sequence motif" description="Q motif">
    <location>
        <begin position="69"/>
        <end position="97"/>
    </location>
</feature>
<feature type="short sequence motif" description="DEAD box">
    <location>
        <begin position="222"/>
        <end position="225"/>
    </location>
</feature>
<feature type="compositionally biased region" description="Basic residues" evidence="5">
    <location>
        <begin position="21"/>
        <end position="41"/>
    </location>
</feature>
<feature type="compositionally biased region" description="Basic and acidic residues" evidence="5">
    <location>
        <begin position="562"/>
        <end position="575"/>
    </location>
</feature>
<feature type="compositionally biased region" description="Acidic residues" evidence="5">
    <location>
        <begin position="578"/>
        <end position="593"/>
    </location>
</feature>
<feature type="compositionally biased region" description="Basic and acidic residues" evidence="5">
    <location>
        <begin position="594"/>
        <end position="604"/>
    </location>
</feature>
<feature type="compositionally biased region" description="Basic and acidic residues" evidence="5">
    <location>
        <begin position="734"/>
        <end position="744"/>
    </location>
</feature>
<feature type="compositionally biased region" description="Basic residues" evidence="5">
    <location>
        <begin position="745"/>
        <end position="754"/>
    </location>
</feature>
<feature type="compositionally biased region" description="Basic and acidic residues" evidence="5">
    <location>
        <begin position="755"/>
        <end position="774"/>
    </location>
</feature>
<feature type="compositionally biased region" description="Acidic residues" evidence="5">
    <location>
        <begin position="775"/>
        <end position="789"/>
    </location>
</feature>
<feature type="compositionally biased region" description="Basic and acidic residues" evidence="5">
    <location>
        <begin position="797"/>
        <end position="831"/>
    </location>
</feature>
<feature type="binding site" evidence="3">
    <location>
        <begin position="89"/>
        <end position="91"/>
    </location>
    <ligand>
        <name>ATP</name>
        <dbReference type="ChEBI" id="CHEBI:30616"/>
    </ligand>
</feature>
<feature type="binding site" evidence="1">
    <location>
        <position position="96"/>
    </location>
    <ligand>
        <name>ATP</name>
        <dbReference type="ChEBI" id="CHEBI:30616"/>
    </ligand>
</feature>
<feature type="binding site" evidence="3">
    <location>
        <begin position="113"/>
        <end position="120"/>
    </location>
    <ligand>
        <name>ATP</name>
        <dbReference type="ChEBI" id="CHEBI:30616"/>
    </ligand>
</feature>
<feature type="modified residue" description="Phosphothreonine" evidence="2">
    <location>
        <position position="4"/>
    </location>
</feature>
<feature type="modified residue" description="Phosphoserine" evidence="2">
    <location>
        <position position="7"/>
    </location>
</feature>
<feature type="modified residue" description="Phosphoserine" evidence="2">
    <location>
        <position position="540"/>
    </location>
</feature>
<feature type="modified residue" description="N6-acetyllysine" evidence="10">
    <location>
        <position position="556"/>
    </location>
</feature>
<feature type="modified residue" description="Phosphothreonine" evidence="7 8 9">
    <location>
        <position position="587"/>
    </location>
</feature>
<feature type="modified residue" description="Phosphoserine" evidence="9">
    <location>
        <position position="783"/>
    </location>
</feature>
<feature type="cross-link" description="Glycyl lysine isopeptide (Lys-Gly) (interchain with G-Cter in SUMO2)" evidence="2">
    <location>
        <position position="652"/>
    </location>
</feature>
<proteinExistence type="evidence at protein level"/>